<accession>P02778</accession>
<accession>Q96QJ5</accession>
<dbReference type="EMBL" id="X02530">
    <property type="protein sequence ID" value="CAA26370.1"/>
    <property type="molecule type" value="mRNA"/>
</dbReference>
<dbReference type="EMBL" id="BC010954">
    <property type="protein sequence ID" value="AAH10954.1"/>
    <property type="molecule type" value="mRNA"/>
</dbReference>
<dbReference type="CCDS" id="CCDS43240.1"/>
<dbReference type="PIR" id="A03243">
    <property type="entry name" value="TGHUGI"/>
</dbReference>
<dbReference type="RefSeq" id="NP_001556.2">
    <property type="nucleotide sequence ID" value="NM_001565.4"/>
</dbReference>
<dbReference type="PDB" id="1LV9">
    <property type="method" value="NMR"/>
    <property type="chains" value="A=22-98"/>
</dbReference>
<dbReference type="PDB" id="1O7Y">
    <property type="method" value="X-ray"/>
    <property type="resolution" value="3.00 A"/>
    <property type="chains" value="A/B/C/D=22-98"/>
</dbReference>
<dbReference type="PDB" id="1O7Z">
    <property type="method" value="X-ray"/>
    <property type="resolution" value="1.92 A"/>
    <property type="chains" value="A/B=22-98"/>
</dbReference>
<dbReference type="PDB" id="1O80">
    <property type="method" value="X-ray"/>
    <property type="resolution" value="2.00 A"/>
    <property type="chains" value="A/B=22-98"/>
</dbReference>
<dbReference type="PDB" id="8K2X">
    <property type="method" value="EM"/>
    <property type="resolution" value="3.20 A"/>
    <property type="chains" value="L=1-98"/>
</dbReference>
<dbReference type="PDBsum" id="1LV9"/>
<dbReference type="PDBsum" id="1O7Y"/>
<dbReference type="PDBsum" id="1O7Z"/>
<dbReference type="PDBsum" id="1O80"/>
<dbReference type="PDBsum" id="8K2X"/>
<dbReference type="EMDB" id="EMD-36842"/>
<dbReference type="SMR" id="P02778"/>
<dbReference type="BioGRID" id="109839">
    <property type="interactions" value="20"/>
</dbReference>
<dbReference type="DIP" id="DIP-5893N"/>
<dbReference type="FunCoup" id="P02778">
    <property type="interactions" value="897"/>
</dbReference>
<dbReference type="IntAct" id="P02778">
    <property type="interactions" value="19"/>
</dbReference>
<dbReference type="MINT" id="P02778"/>
<dbReference type="STRING" id="9606.ENSP00000305651"/>
<dbReference type="BindingDB" id="P02778"/>
<dbReference type="ChEMBL" id="CHEMBL3712964"/>
<dbReference type="DrugBank" id="DB11338">
    <property type="generic name" value="Clove oil"/>
</dbReference>
<dbReference type="DrugBank" id="DB06116">
    <property type="generic name" value="Eldelumab"/>
</dbReference>
<dbReference type="DrugBank" id="DB04487">
    <property type="generic name" value="N-Methylleucine"/>
</dbReference>
<dbReference type="iPTMnet" id="P02778"/>
<dbReference type="PhosphoSitePlus" id="P02778"/>
<dbReference type="BioMuta" id="CXCL10"/>
<dbReference type="DMDM" id="21542456"/>
<dbReference type="CPTAC" id="CPTAC-5938"/>
<dbReference type="jPOST" id="P02778"/>
<dbReference type="MassIVE" id="P02778"/>
<dbReference type="PaxDb" id="9606-ENSP00000305651"/>
<dbReference type="PeptideAtlas" id="P02778"/>
<dbReference type="ProteomicsDB" id="51594"/>
<dbReference type="ABCD" id="P02778">
    <property type="antibodies" value="57 sequenced antibodies"/>
</dbReference>
<dbReference type="Antibodypedia" id="6335">
    <property type="antibodies" value="921 antibodies from 44 providers"/>
</dbReference>
<dbReference type="CPTC" id="P02778">
    <property type="antibodies" value="2 antibodies"/>
</dbReference>
<dbReference type="DNASU" id="3627"/>
<dbReference type="Ensembl" id="ENST00000306602.3">
    <property type="protein sequence ID" value="ENSP00000305651.1"/>
    <property type="gene ID" value="ENSG00000169245.6"/>
</dbReference>
<dbReference type="GeneID" id="3627"/>
<dbReference type="KEGG" id="hsa:3627"/>
<dbReference type="MANE-Select" id="ENST00000306602.3">
    <property type="protein sequence ID" value="ENSP00000305651.1"/>
    <property type="RefSeq nucleotide sequence ID" value="NM_001565.4"/>
    <property type="RefSeq protein sequence ID" value="NP_001556.2"/>
</dbReference>
<dbReference type="UCSC" id="uc003hjl.5">
    <property type="organism name" value="human"/>
</dbReference>
<dbReference type="AGR" id="HGNC:10637"/>
<dbReference type="CTD" id="3627"/>
<dbReference type="DisGeNET" id="3627"/>
<dbReference type="GeneCards" id="CXCL10"/>
<dbReference type="HGNC" id="HGNC:10637">
    <property type="gene designation" value="CXCL10"/>
</dbReference>
<dbReference type="HPA" id="ENSG00000169245">
    <property type="expression patterns" value="Tissue enhanced (lymphoid)"/>
</dbReference>
<dbReference type="MIM" id="147310">
    <property type="type" value="gene"/>
</dbReference>
<dbReference type="neXtProt" id="NX_P02778"/>
<dbReference type="OpenTargets" id="ENSG00000169245"/>
<dbReference type="PharmGKB" id="PA35568"/>
<dbReference type="VEuPathDB" id="HostDB:ENSG00000169245"/>
<dbReference type="eggNOG" id="ENOG502S7MM">
    <property type="taxonomic scope" value="Eukaryota"/>
</dbReference>
<dbReference type="GeneTree" id="ENSGT00940000161759"/>
<dbReference type="HOGENOM" id="CLU_143902_2_2_1"/>
<dbReference type="InParanoid" id="P02778"/>
<dbReference type="OMA" id="RNIRCRC"/>
<dbReference type="OrthoDB" id="9948647at2759"/>
<dbReference type="PAN-GO" id="P02778">
    <property type="GO annotations" value="8 GO annotations based on evolutionary models"/>
</dbReference>
<dbReference type="PhylomeDB" id="P02778"/>
<dbReference type="TreeFam" id="TF333433"/>
<dbReference type="PathwayCommons" id="P02778"/>
<dbReference type="Reactome" id="R-HSA-380108">
    <property type="pathway name" value="Chemokine receptors bind chemokines"/>
</dbReference>
<dbReference type="Reactome" id="R-HSA-418594">
    <property type="pathway name" value="G alpha (i) signalling events"/>
</dbReference>
<dbReference type="Reactome" id="R-HSA-6783783">
    <property type="pathway name" value="Interleukin-10 signaling"/>
</dbReference>
<dbReference type="SignaLink" id="P02778"/>
<dbReference type="SIGNOR" id="P02778"/>
<dbReference type="BioGRID-ORCS" id="3627">
    <property type="hits" value="12 hits in 1152 CRISPR screens"/>
</dbReference>
<dbReference type="ChiTaRS" id="CXCL10">
    <property type="organism name" value="human"/>
</dbReference>
<dbReference type="EvolutionaryTrace" id="P02778"/>
<dbReference type="GeneWiki" id="CXCL10"/>
<dbReference type="GenomeRNAi" id="3627"/>
<dbReference type="Pharos" id="P02778">
    <property type="development level" value="Tbio"/>
</dbReference>
<dbReference type="PRO" id="PR:P02778"/>
<dbReference type="Proteomes" id="UP000005640">
    <property type="component" value="Chromosome 4"/>
</dbReference>
<dbReference type="RNAct" id="P02778">
    <property type="molecule type" value="protein"/>
</dbReference>
<dbReference type="Bgee" id="ENSG00000169245">
    <property type="expression patterns" value="Expressed in vermiform appendix and 147 other cell types or tissues"/>
</dbReference>
<dbReference type="GO" id="GO:0009897">
    <property type="term" value="C:external side of plasma membrane"/>
    <property type="evidence" value="ECO:0007669"/>
    <property type="project" value="Ensembl"/>
</dbReference>
<dbReference type="GO" id="GO:0005576">
    <property type="term" value="C:extracellular region"/>
    <property type="evidence" value="ECO:0000314"/>
    <property type="project" value="BHF-UCL"/>
</dbReference>
<dbReference type="GO" id="GO:0005615">
    <property type="term" value="C:extracellular space"/>
    <property type="evidence" value="ECO:0000318"/>
    <property type="project" value="GO_Central"/>
</dbReference>
<dbReference type="GO" id="GO:0008603">
    <property type="term" value="F:cAMP-dependent protein kinase regulator activity"/>
    <property type="evidence" value="ECO:0000304"/>
    <property type="project" value="ProtInc"/>
</dbReference>
<dbReference type="GO" id="GO:0042056">
    <property type="term" value="F:chemoattractant activity"/>
    <property type="evidence" value="ECO:0000314"/>
    <property type="project" value="UniProtKB"/>
</dbReference>
<dbReference type="GO" id="GO:0008009">
    <property type="term" value="F:chemokine activity"/>
    <property type="evidence" value="ECO:0000314"/>
    <property type="project" value="UniProtKB"/>
</dbReference>
<dbReference type="GO" id="GO:0045236">
    <property type="term" value="F:CXCR chemokine receptor binding"/>
    <property type="evidence" value="ECO:0000318"/>
    <property type="project" value="GO_Central"/>
</dbReference>
<dbReference type="GO" id="GO:0048248">
    <property type="term" value="F:CXCR3 chemokine receptor binding"/>
    <property type="evidence" value="ECO:0000314"/>
    <property type="project" value="UniProtKB"/>
</dbReference>
<dbReference type="GO" id="GO:0008201">
    <property type="term" value="F:heparin binding"/>
    <property type="evidence" value="ECO:0000315"/>
    <property type="project" value="UniProtKB"/>
</dbReference>
<dbReference type="GO" id="GO:0005102">
    <property type="term" value="F:signaling receptor binding"/>
    <property type="evidence" value="ECO:0000304"/>
    <property type="project" value="ProtInc"/>
</dbReference>
<dbReference type="GO" id="GO:0007189">
    <property type="term" value="P:adenylate cyclase-activating G protein-coupled receptor signaling pathway"/>
    <property type="evidence" value="ECO:0000314"/>
    <property type="project" value="UniProtKB"/>
</dbReference>
<dbReference type="GO" id="GO:0140374">
    <property type="term" value="P:antiviral innate immune response"/>
    <property type="evidence" value="ECO:0000270"/>
    <property type="project" value="ARUK-UCL"/>
</dbReference>
<dbReference type="GO" id="GO:0008015">
    <property type="term" value="P:blood circulation"/>
    <property type="evidence" value="ECO:0000304"/>
    <property type="project" value="ProtInc"/>
</dbReference>
<dbReference type="GO" id="GO:0007166">
    <property type="term" value="P:cell surface receptor signaling pathway"/>
    <property type="evidence" value="ECO:0000304"/>
    <property type="project" value="ProtInc"/>
</dbReference>
<dbReference type="GO" id="GO:0007267">
    <property type="term" value="P:cell-cell signaling"/>
    <property type="evidence" value="ECO:0000304"/>
    <property type="project" value="ProtInc"/>
</dbReference>
<dbReference type="GO" id="GO:0034605">
    <property type="term" value="P:cellular response to heat"/>
    <property type="evidence" value="ECO:0007669"/>
    <property type="project" value="Ensembl"/>
</dbReference>
<dbReference type="GO" id="GO:0097398">
    <property type="term" value="P:cellular response to interleukin-17"/>
    <property type="evidence" value="ECO:0007669"/>
    <property type="project" value="Ensembl"/>
</dbReference>
<dbReference type="GO" id="GO:0071222">
    <property type="term" value="P:cellular response to lipopolysaccharide"/>
    <property type="evidence" value="ECO:0000315"/>
    <property type="project" value="MGI"/>
</dbReference>
<dbReference type="GO" id="GO:0098586">
    <property type="term" value="P:cellular response to virus"/>
    <property type="evidence" value="ECO:0000270"/>
    <property type="project" value="ARUK-UCL"/>
</dbReference>
<dbReference type="GO" id="GO:0070098">
    <property type="term" value="P:chemokine-mediated signaling pathway"/>
    <property type="evidence" value="ECO:0000315"/>
    <property type="project" value="UniProtKB"/>
</dbReference>
<dbReference type="GO" id="GO:0006935">
    <property type="term" value="P:chemotaxis"/>
    <property type="evidence" value="ECO:0000314"/>
    <property type="project" value="UniProtKB"/>
</dbReference>
<dbReference type="GO" id="GO:0042118">
    <property type="term" value="P:endothelial cell activation"/>
    <property type="evidence" value="ECO:0000316"/>
    <property type="project" value="CACAO"/>
</dbReference>
<dbReference type="GO" id="GO:0007186">
    <property type="term" value="P:G protein-coupled receptor signaling pathway"/>
    <property type="evidence" value="ECO:0000315"/>
    <property type="project" value="UniProtKB"/>
</dbReference>
<dbReference type="GO" id="GO:0006954">
    <property type="term" value="P:inflammatory response"/>
    <property type="evidence" value="ECO:0000318"/>
    <property type="project" value="GO_Central"/>
</dbReference>
<dbReference type="GO" id="GO:0007517">
    <property type="term" value="P:muscle organ development"/>
    <property type="evidence" value="ECO:0000304"/>
    <property type="project" value="ProtInc"/>
</dbReference>
<dbReference type="GO" id="GO:0016525">
    <property type="term" value="P:negative regulation of angiogenesis"/>
    <property type="evidence" value="ECO:0000314"/>
    <property type="project" value="UniProtKB"/>
</dbReference>
<dbReference type="GO" id="GO:0045662">
    <property type="term" value="P:negative regulation of myoblast differentiation"/>
    <property type="evidence" value="ECO:0007669"/>
    <property type="project" value="Ensembl"/>
</dbReference>
<dbReference type="GO" id="GO:1901740">
    <property type="term" value="P:negative regulation of myoblast fusion"/>
    <property type="evidence" value="ECO:0007669"/>
    <property type="project" value="Ensembl"/>
</dbReference>
<dbReference type="GO" id="GO:0030593">
    <property type="term" value="P:neutrophil chemotaxis"/>
    <property type="evidence" value="ECO:0000318"/>
    <property type="project" value="GO_Central"/>
</dbReference>
<dbReference type="GO" id="GO:0008284">
    <property type="term" value="P:positive regulation of cell population proliferation"/>
    <property type="evidence" value="ECO:0000304"/>
    <property type="project" value="ProtInc"/>
</dbReference>
<dbReference type="GO" id="GO:0090026">
    <property type="term" value="P:positive regulation of monocyte chemotaxis"/>
    <property type="evidence" value="ECO:0000314"/>
    <property type="project" value="CACAO"/>
</dbReference>
<dbReference type="GO" id="GO:0051281">
    <property type="term" value="P:positive regulation of release of sequestered calcium ion into cytosol"/>
    <property type="evidence" value="ECO:0000314"/>
    <property type="project" value="UniProtKB"/>
</dbReference>
<dbReference type="GO" id="GO:2000406">
    <property type="term" value="P:positive regulation of T cell migration"/>
    <property type="evidence" value="ECO:0000314"/>
    <property type="project" value="MGI"/>
</dbReference>
<dbReference type="GO" id="GO:0045944">
    <property type="term" value="P:positive regulation of transcription by RNA polymerase II"/>
    <property type="evidence" value="ECO:0000304"/>
    <property type="project" value="UniProtKB"/>
</dbReference>
<dbReference type="GO" id="GO:0042981">
    <property type="term" value="P:regulation of apoptotic process"/>
    <property type="evidence" value="ECO:0000314"/>
    <property type="project" value="UniProtKB"/>
</dbReference>
<dbReference type="GO" id="GO:0042127">
    <property type="term" value="P:regulation of cell population proliferation"/>
    <property type="evidence" value="ECO:0000314"/>
    <property type="project" value="UniProtKB"/>
</dbReference>
<dbReference type="GO" id="GO:1901509">
    <property type="term" value="P:regulation of endothelial tube morphogenesis"/>
    <property type="evidence" value="ECO:0000314"/>
    <property type="project" value="CACAO"/>
</dbReference>
<dbReference type="GO" id="GO:0010819">
    <property type="term" value="P:regulation of T cell chemotaxis"/>
    <property type="evidence" value="ECO:0000314"/>
    <property type="project" value="CACAO"/>
</dbReference>
<dbReference type="GO" id="GO:0010996">
    <property type="term" value="P:response to auditory stimulus"/>
    <property type="evidence" value="ECO:0007669"/>
    <property type="project" value="Ensembl"/>
</dbReference>
<dbReference type="GO" id="GO:0010332">
    <property type="term" value="P:response to gamma radiation"/>
    <property type="evidence" value="ECO:0007669"/>
    <property type="project" value="Ensembl"/>
</dbReference>
<dbReference type="GO" id="GO:0033280">
    <property type="term" value="P:response to vitamin D"/>
    <property type="evidence" value="ECO:0007669"/>
    <property type="project" value="Ensembl"/>
</dbReference>
<dbReference type="GO" id="GO:0007165">
    <property type="term" value="P:signal transduction"/>
    <property type="evidence" value="ECO:0000304"/>
    <property type="project" value="ProtInc"/>
</dbReference>
<dbReference type="GO" id="GO:0010818">
    <property type="term" value="P:T cell chemotaxis"/>
    <property type="evidence" value="ECO:0000315"/>
    <property type="project" value="UniProtKB"/>
</dbReference>
<dbReference type="CDD" id="cd00273">
    <property type="entry name" value="Chemokine_CXC"/>
    <property type="match status" value="1"/>
</dbReference>
<dbReference type="FunFam" id="2.40.50.40:FF:000004">
    <property type="entry name" value="C-X-C motif chemokine"/>
    <property type="match status" value="1"/>
</dbReference>
<dbReference type="Gene3D" id="2.40.50.40">
    <property type="match status" value="1"/>
</dbReference>
<dbReference type="InterPro" id="IPR039809">
    <property type="entry name" value="Chemokine_b/g/d"/>
</dbReference>
<dbReference type="InterPro" id="IPR001089">
    <property type="entry name" value="Chemokine_CXC"/>
</dbReference>
<dbReference type="InterPro" id="IPR018048">
    <property type="entry name" value="Chemokine_CXC_CS"/>
</dbReference>
<dbReference type="InterPro" id="IPR001811">
    <property type="entry name" value="Chemokine_IL8-like_dom"/>
</dbReference>
<dbReference type="InterPro" id="IPR033899">
    <property type="entry name" value="CXC_Chemokine_domain"/>
</dbReference>
<dbReference type="InterPro" id="IPR036048">
    <property type="entry name" value="Interleukin_8-like_sf"/>
</dbReference>
<dbReference type="PANTHER" id="PTHR12015:SF188">
    <property type="entry name" value="C-X-C MOTIF CHEMOKINE 10"/>
    <property type="match status" value="1"/>
</dbReference>
<dbReference type="PANTHER" id="PTHR12015">
    <property type="entry name" value="SMALL INDUCIBLE CYTOKINE A"/>
    <property type="match status" value="1"/>
</dbReference>
<dbReference type="Pfam" id="PF00048">
    <property type="entry name" value="IL8"/>
    <property type="match status" value="1"/>
</dbReference>
<dbReference type="PRINTS" id="PR00437">
    <property type="entry name" value="SMALLCYTKCXC"/>
</dbReference>
<dbReference type="SMART" id="SM00199">
    <property type="entry name" value="SCY"/>
    <property type="match status" value="1"/>
</dbReference>
<dbReference type="SUPFAM" id="SSF54117">
    <property type="entry name" value="Interleukin 8-like chemokines"/>
    <property type="match status" value="1"/>
</dbReference>
<dbReference type="PROSITE" id="PS00471">
    <property type="entry name" value="SMALL_CYTOKINES_CXC"/>
    <property type="match status" value="1"/>
</dbReference>
<organism>
    <name type="scientific">Homo sapiens</name>
    <name type="common">Human</name>
    <dbReference type="NCBI Taxonomy" id="9606"/>
    <lineage>
        <taxon>Eukaryota</taxon>
        <taxon>Metazoa</taxon>
        <taxon>Chordata</taxon>
        <taxon>Craniata</taxon>
        <taxon>Vertebrata</taxon>
        <taxon>Euteleostomi</taxon>
        <taxon>Mammalia</taxon>
        <taxon>Eutheria</taxon>
        <taxon>Euarchontoglires</taxon>
        <taxon>Primates</taxon>
        <taxon>Haplorrhini</taxon>
        <taxon>Catarrhini</taxon>
        <taxon>Hominidae</taxon>
        <taxon>Homo</taxon>
    </lineage>
</organism>
<gene>
    <name type="primary">CXCL10</name>
    <name type="synonym">INP10</name>
    <name type="synonym">SCYB10</name>
</gene>
<comment type="function">
    <text evidence="1 3 6 8 10 12 13">Pro-inflammatory cytokine that is involved in a wide variety of processes such as chemotaxis, differentiation, and activation of peripheral immune cells, regulation of cell growth, apoptosis and modulation of angiostatic effects (PubMed:11157474, PubMed:22652417, PubMed:7540647). Plays thereby an important role during viral infections by stimulating the activation and migration of immune cells to the infected sites (By similarity). Mechanistically, binding of CXCL10 to the CXCR3 receptor activates G protein-mediated signaling and results in downstream activation of phospholipase C-dependent pathway, an increase in intracellular calcium production and actin reorganization (PubMed:12750173, PubMed:19151743). In turn, recruitment of activated Th1 lymphocytes occurs at sites of inflammation (PubMed:12663757, PubMed:12750173). Activation of the CXCL10/CXCR3 axis also plays an important role in neurons in response to brain injury for activating microglia, the resident macrophage population of the central nervous system, and directing them to the lesion site. This recruitment is an essential element for neuronal reorganization (By similarity).</text>
</comment>
<comment type="subunit">
    <text evidence="7 10">Monomer, dimer, and tetramer (PubMed:12737818). Interacts with CXCR3 (via N-terminus) (PubMed:19151743).</text>
</comment>
<comment type="interaction">
    <interactant intactId="EBI-7815386">
        <id>P02778</id>
    </interactant>
    <interactant intactId="EBI-727357">
        <id>P51671</id>
        <label>CCL11</label>
    </interactant>
    <organismsDiffer>false</organismsDiffer>
    <experiments>2</experiments>
</comment>
<comment type="interaction">
    <interactant intactId="EBI-7815386">
        <id>P02778</id>
    </interactant>
    <interactant intactId="EBI-725342">
        <id>Q99616</id>
        <label>CCL13</label>
    </interactant>
    <organismsDiffer>false</organismsDiffer>
    <experiments>2</experiments>
</comment>
<comment type="interaction">
    <interactant intactId="EBI-7815386">
        <id>P02778</id>
    </interactant>
    <interactant intactId="EBI-953695">
        <id>O00585</id>
        <label>CCL21</label>
    </interactant>
    <organismsDiffer>false</organismsDiffer>
    <experiments>2</experiments>
</comment>
<comment type="interaction">
    <interactant intactId="EBI-7815386">
        <id>P02778</id>
    </interactant>
    <interactant intactId="EBI-7783416">
        <id>Q9Y258</id>
        <label>CCL26</label>
    </interactant>
    <organismsDiffer>false</organismsDiffer>
    <experiments>2</experiments>
</comment>
<comment type="interaction">
    <interactant intactId="EBI-7815386">
        <id>P02778</id>
    </interactant>
    <interactant intactId="EBI-7783254">
        <id>Q9NRJ3</id>
        <label>CCL28</label>
    </interactant>
    <organismsDiffer>false</organismsDiffer>
    <experiments>2</experiments>
</comment>
<comment type="interaction">
    <interactant intactId="EBI-7815386">
        <id>P02778</id>
    </interactant>
    <interactant intactId="EBI-2848366">
        <id>P13501</id>
        <label>CCL5</label>
    </interactant>
    <organismsDiffer>false</organismsDiffer>
    <experiments>2</experiments>
</comment>
<comment type="interaction">
    <interactant intactId="EBI-7815386">
        <id>P02778</id>
    </interactant>
    <interactant intactId="EBI-3913254">
        <id>P48061</id>
        <label>CXCL12</label>
    </interactant>
    <organismsDiffer>false</organismsDiffer>
    <experiments>2</experiments>
</comment>
<comment type="interaction">
    <interactant intactId="EBI-7815386">
        <id>P02778</id>
    </interactant>
    <interactant intactId="EBI-3911467">
        <id>Q07325</id>
        <label>CXCL9</label>
    </interactant>
    <organismsDiffer>false</organismsDiffer>
    <experiments>2</experiments>
</comment>
<comment type="interaction">
    <interactant intactId="EBI-7815386">
        <id>P02778</id>
    </interactant>
    <interactant intactId="EBI-2871277">
        <id>P27487</id>
        <label>DPP4</label>
    </interactant>
    <organismsDiffer>false</organismsDiffer>
    <experiments>2</experiments>
</comment>
<comment type="interaction">
    <interactant intactId="EBI-7815386">
        <id>P02778</id>
    </interactant>
    <interactant intactId="EBI-2565740">
        <id>P02776</id>
        <label>PF4</label>
    </interactant>
    <organismsDiffer>false</organismsDiffer>
    <experiments>2</experiments>
</comment>
<comment type="subcellular location">
    <subcellularLocation>
        <location evidence="11">Secreted</location>
    </subcellularLocation>
</comment>
<comment type="tissue specificity">
    <text evidence="3 6">Mainly secreted by monocytes, endothelial cells as well as fibroblasts. Expressed by epithelial cells in thymus (PubMed:11157474). Microglial cells produce CXCL10 in response to viral stimulation (PubMed:12663757).</text>
</comment>
<comment type="induction">
    <text>By IFNG/IFN-gamma. A diverse population of cell types rapidly increases transcription of mRNA encoding this protein. This suggests that gamma-induced protein may be a key mediator of the IFNG/IFN-gamma response.</text>
</comment>
<comment type="PTM">
    <text evidence="11">Several proteases can mediate post-secretion cleavages. DPP4 cleaves CXCL10 on its N-terminal 2 amino acids leading to an antagonist form of CXCL10. This dominant negative form is capable of binding CXCR3 but does not induce signaling. MMP9 cleaves 9 amino acids instead.</text>
</comment>
<comment type="mass spectrometry">
    <molecule>C-X-C motif chemokine 10</molecule>
</comment>
<comment type="similarity">
    <text evidence="15">Belongs to the intercrine alpha (chemokine CxC) family.</text>
</comment>
<comment type="online information" name="Wikipedia">
    <link uri="https://en.wikipedia.org/wiki/CXCL10"/>
    <text>CXCL10 entry</text>
</comment>
<comment type="online information" name="Atlas of Genetics and Cytogenetics in Oncology and Haematology">
    <link uri="https://atlasgeneticsoncology.org/gene/40218/CXCL10"/>
</comment>
<protein>
    <recommendedName>
        <fullName>C-X-C motif chemokine 10</fullName>
    </recommendedName>
    <alternativeName>
        <fullName>10 kDa interferon gamma-induced protein</fullName>
        <shortName>Gamma-IP10</shortName>
        <shortName>IP-10</shortName>
    </alternativeName>
    <alternativeName>
        <fullName>Small-inducible cytokine B10</fullName>
    </alternativeName>
    <component>
        <recommendedName>
            <fullName>CXCL10(1-73)</fullName>
        </recommendedName>
    </component>
</protein>
<evidence type="ECO:0000250" key="1">
    <source>
        <dbReference type="UniProtKB" id="P17515"/>
    </source>
</evidence>
<evidence type="ECO:0000269" key="2">
    <source>
    </source>
</evidence>
<evidence type="ECO:0000269" key="3">
    <source>
    </source>
</evidence>
<evidence type="ECO:0000269" key="4">
    <source>
    </source>
</evidence>
<evidence type="ECO:0000269" key="5">
    <source>
    </source>
</evidence>
<evidence type="ECO:0000269" key="6">
    <source>
    </source>
</evidence>
<evidence type="ECO:0000269" key="7">
    <source>
    </source>
</evidence>
<evidence type="ECO:0000269" key="8">
    <source>
    </source>
</evidence>
<evidence type="ECO:0000269" key="9">
    <source>
    </source>
</evidence>
<evidence type="ECO:0000269" key="10">
    <source>
    </source>
</evidence>
<evidence type="ECO:0000269" key="11">
    <source>
    </source>
</evidence>
<evidence type="ECO:0000269" key="12">
    <source>
    </source>
</evidence>
<evidence type="ECO:0000269" key="13">
    <source>
    </source>
</evidence>
<evidence type="ECO:0000269" key="14">
    <source>
    </source>
</evidence>
<evidence type="ECO:0000305" key="15"/>
<evidence type="ECO:0007744" key="16">
    <source>
        <dbReference type="PDB" id="1LV9"/>
    </source>
</evidence>
<evidence type="ECO:0007744" key="17">
    <source>
        <dbReference type="PDB" id="1O7Y"/>
    </source>
</evidence>
<evidence type="ECO:0007744" key="18">
    <source>
        <dbReference type="PDB" id="1O7Z"/>
    </source>
</evidence>
<evidence type="ECO:0007744" key="19">
    <source>
        <dbReference type="PDB" id="1O80"/>
    </source>
</evidence>
<evidence type="ECO:0007829" key="20">
    <source>
        <dbReference type="PDB" id="1O7Z"/>
    </source>
</evidence>
<evidence type="ECO:0007829" key="21">
    <source>
        <dbReference type="PDB" id="1O80"/>
    </source>
</evidence>
<proteinExistence type="evidence at protein level"/>
<sequence>MNQTAILICCLIFLTLSGIQGVPLSRTVRCTCISISNQPVNPRSLEKLEIIPASQFCPRVEIIATMKKKGEKRCLNPESKAIKNLLKAVSKERSKRSP</sequence>
<feature type="signal peptide" evidence="2 4 14">
    <location>
        <begin position="1"/>
        <end position="21"/>
    </location>
</feature>
<feature type="chain" id="PRO_0000005101" description="C-X-C motif chemokine 10">
    <location>
        <begin position="22"/>
        <end position="98"/>
    </location>
</feature>
<feature type="chain" id="PRO_0000005102" description="CXCL10(1-73)">
    <location>
        <begin position="22"/>
        <end position="94"/>
    </location>
</feature>
<feature type="modified residue" description="Citrulline; by PAD2" evidence="9">
    <location>
        <position position="26"/>
    </location>
</feature>
<feature type="disulfide bond" evidence="5 7 16 17 18 19">
    <location>
        <begin position="30"/>
        <end position="57"/>
    </location>
</feature>
<feature type="disulfide bond" evidence="5 7 16 17 18 19">
    <location>
        <begin position="32"/>
        <end position="74"/>
    </location>
</feature>
<feature type="sequence conflict" description="In Ref. 1; CAA26370." evidence="15" ref="1">
    <original>R</original>
    <variation>M</variation>
    <location>
        <position position="93"/>
    </location>
</feature>
<feature type="turn" evidence="20">
    <location>
        <begin position="42"/>
        <end position="44"/>
    </location>
</feature>
<feature type="strand" evidence="20">
    <location>
        <begin position="45"/>
        <end position="51"/>
    </location>
</feature>
<feature type="strand" evidence="21">
    <location>
        <begin position="57"/>
        <end position="59"/>
    </location>
</feature>
<feature type="strand" evidence="20">
    <location>
        <begin position="61"/>
        <end position="66"/>
    </location>
</feature>
<feature type="turn" evidence="20">
    <location>
        <begin position="67"/>
        <end position="69"/>
    </location>
</feature>
<feature type="strand" evidence="20">
    <location>
        <begin position="72"/>
        <end position="75"/>
    </location>
</feature>
<feature type="strand" evidence="20">
    <location>
        <begin position="77"/>
        <end position="79"/>
    </location>
</feature>
<feature type="helix" evidence="20">
    <location>
        <begin position="80"/>
        <end position="88"/>
    </location>
</feature>
<reference key="1">
    <citation type="journal article" date="1985" name="Nature">
        <title>Gamma-interferon transcriptionally regulates an early-response gene containing homology to platelet proteins.</title>
        <authorList>
            <person name="Luster A.D."/>
            <person name="Unkeless J.C."/>
            <person name="Ravetch J.V."/>
        </authorList>
    </citation>
    <scope>NUCLEOTIDE SEQUENCE [MRNA]</scope>
</reference>
<reference key="2">
    <citation type="journal article" date="2004" name="Genome Res.">
        <title>The status, quality, and expansion of the NIH full-length cDNA project: the Mammalian Gene Collection (MGC).</title>
        <authorList>
            <consortium name="The MGC Project Team"/>
        </authorList>
    </citation>
    <scope>NUCLEOTIDE SEQUENCE [LARGE SCALE MRNA]</scope>
    <source>
        <tissue>Prostate</tissue>
    </source>
</reference>
<reference key="3">
    <citation type="journal article" date="1993" name="J. Immunol.">
        <title>Identification of a novel granulocyte chemotactic protein (GCP-2) from human tumor cells. In vitro and in vivo comparison with natural forms of GRO, IP-10, and IL-8.</title>
        <authorList>
            <person name="Proost P."/>
            <person name="de Wolf-Peeters C."/>
            <person name="Conings R."/>
            <person name="Opdenakker G."/>
            <person name="Billiau A."/>
            <person name="van Damme J."/>
        </authorList>
    </citation>
    <scope>PROTEIN SEQUENCE OF 22-51</scope>
</reference>
<reference key="4">
    <citation type="journal article" date="1995" name="J. Exp. Med.">
        <title>Human interferon-inducible protein 10 is a potent inhibitor of angiogenesis in vivo.</title>
        <authorList>
            <person name="Angiolillo A.L."/>
            <person name="Sgadari C."/>
            <person name="Taub D.D."/>
            <person name="Liao F."/>
            <person name="Farber J.M."/>
            <person name="Maheshwari S."/>
            <person name="Kleinman H.K."/>
            <person name="Reaman G.H."/>
            <person name="Tosato G."/>
        </authorList>
    </citation>
    <scope>FUNCTION</scope>
</reference>
<reference key="5">
    <citation type="journal article" date="1996" name="J. Exp. Med.">
        <title>Chemokine receptor specific for IP10 and mig: structure, function, and expression in activated T-lymphocytes.</title>
        <authorList>
            <person name="Loetscher M."/>
            <person name="Gerber B."/>
            <person name="Loetscher P."/>
            <person name="Jones S.A."/>
            <person name="Piali L."/>
            <person name="Clark-Lewis I."/>
            <person name="Baggiolini M."/>
            <person name="Moser B."/>
        </authorList>
    </citation>
    <scope>FUNCTION</scope>
</reference>
<reference key="6">
    <citation type="journal article" date="1999" name="J. Invest. Dermatol.">
        <title>Human IP-9: a keratinocyte derived high affinity CXC-chemokine ligand for the IP-10/Mig receptor (CXCR3).</title>
        <authorList>
            <person name="Tensen C.P."/>
            <person name="Flier J."/>
            <person name="van der Raaij-Helmer E.M.H."/>
            <person name="Sampat-Sardjoepersad S."/>
            <person name="van der Schors R.C."/>
            <person name="Leurs R."/>
            <person name="Scheper R.J."/>
            <person name="Boorsma D.M."/>
            <person name="Willemze R."/>
        </authorList>
    </citation>
    <scope>PROTEIN SEQUENCE OF 22-29</scope>
    <source>
        <tissue>Keratinocyte</tissue>
    </source>
</reference>
<reference key="7">
    <citation type="journal article" date="2001" name="Eur. J. Biochem.">
        <title>Processing of natural and recombinant CXCR3-targeting chemokines and implications for biological activity.</title>
        <authorList>
            <person name="Hensbergen P.J."/>
            <person name="van der Raaij-Helmer E.M.H."/>
            <person name="Dijkman R."/>
            <person name="van der Schors R.C."/>
            <person name="Werner-Felmayer G."/>
            <person name="Boorsma D.M."/>
            <person name="Scheper R.J."/>
            <person name="Willemze R."/>
            <person name="Tensen C.P."/>
        </authorList>
    </citation>
    <scope>PROTEIN SEQUENCE OF 22-27; 60-67 AND 79-98</scope>
    <scope>MASS SPECTROMETRY</scope>
    <scope>IDENTIFICATION OF CXCL10(1-73)</scope>
    <source>
        <tissue>Foreskin keratinocyte</tissue>
    </source>
</reference>
<reference key="8">
    <citation type="journal article" date="2001" name="Blood">
        <title>Interferon-inducible protein 10, monokine induced by interferon gamma, and interferon-inducible T-cell alpha chemoattractant are produced by thymic epithelial cells and attract T-cell receptor (TCR) alphabeta+ CD8+ single-positive T cells, TCRgammadelta+ T cells, and natural killer-type cells in human thymus.</title>
        <authorList>
            <person name="Romagnani P."/>
            <person name="Annunziato F."/>
            <person name="Lazzeri E."/>
            <person name="Cosmi L."/>
            <person name="Beltrame C."/>
            <person name="Lasagni L."/>
            <person name="Galli G."/>
            <person name="Francalanci M."/>
            <person name="Manetti R."/>
            <person name="Marra F."/>
            <person name="Vanini V."/>
            <person name="Maggi E."/>
            <person name="Romagnani S."/>
        </authorList>
    </citation>
    <scope>FUNCTION</scope>
    <scope>TISSUE SPECIFICITY</scope>
</reference>
<reference key="9">
    <citation type="journal article" date="2003" name="Blood">
        <title>CXCR3-mediated chemotaxis of human T cells is regulated by a Gi- and phospholipase C-dependent pathway and not via activation of MEK/p44/p42 MAPK nor Akt/PI-3 kinase.</title>
        <authorList>
            <person name="Smit M.J."/>
            <person name="Verdijk P."/>
            <person name="van der Raaij-Helmer E.M."/>
            <person name="Navis M."/>
            <person name="Hensbergen P.J."/>
            <person name="Leurs R."/>
            <person name="Tensen C.P."/>
        </authorList>
    </citation>
    <scope>FUNCTION</scope>
</reference>
<reference key="10">
    <citation type="journal article" date="2003" name="J. Virol.">
        <title>CXCL10 production from cytomegalovirus-stimulated microglia is regulated by both human and viral interleukin-10.</title>
        <authorList>
            <person name="Cheeran M.C."/>
            <person name="Hu S."/>
            <person name="Sheng W.S."/>
            <person name="Peterson P.K."/>
            <person name="Lokensgard J.R."/>
        </authorList>
    </citation>
    <scope>TISSUE SPECIFICITY</scope>
    <scope>FUNCTION</scope>
</reference>
<reference key="11">
    <citation type="journal article" date="2008" name="Blood">
        <title>Citrullination of CXCL10 and CXCL11 by peptidylarginine deiminase: a naturally occurring posttranslational modification of chemokines and new dimension of immunoregulation.</title>
        <authorList>
            <person name="Loos T."/>
            <person name="Mortier A."/>
            <person name="Gouwy M."/>
            <person name="Ronsse I."/>
            <person name="Put W."/>
            <person name="Lenaerts J.P."/>
            <person name="Van Damme J."/>
            <person name="Proost P."/>
        </authorList>
    </citation>
    <scope>CITRULLINATION AT ARG-26</scope>
</reference>
<reference key="12">
    <citation type="journal article" date="2009" name="Acta Pharmacol. Sin.">
        <title>Sulfated tyrosines 27 and 29 in the N-terminus of human CXCR3 participate in binding native IP-10.</title>
        <authorList>
            <person name="Gao J.M."/>
            <person name="Xiang R.L."/>
            <person name="Jiang L."/>
            <person name="Li W.H."/>
            <person name="Feng Q.P."/>
            <person name="Guo Z.J."/>
            <person name="Sun Q."/>
            <person name="Zeng Z.P."/>
            <person name="Fang F.D."/>
        </authorList>
    </citation>
    <scope>FUNCTION</scope>
    <scope>INTERACTION WITH CXCR3</scope>
</reference>
<reference key="13">
    <citation type="journal article" date="2011" name="J. Clin. Invest.">
        <title>Evidence for an antagonist form of the chemokine CXCL10 in patients chronically infected with HCV.</title>
        <authorList>
            <person name="Casrouge A."/>
            <person name="Decalf J."/>
            <person name="Ahloulay M."/>
            <person name="Lababidi C."/>
            <person name="Mansour H."/>
            <person name="Vallet-Pichard A."/>
            <person name="Mallet V."/>
            <person name="Mottez E."/>
            <person name="Mapes J."/>
            <person name="Fontanet A."/>
            <person name="Pol S."/>
            <person name="Albert M.L."/>
        </authorList>
    </citation>
    <scope>SUBCELLULAR LOCATION</scope>
    <scope>CLEAVAGE</scope>
</reference>
<reference key="14">
    <citation type="journal article" date="2012" name="Cytokine">
        <title>CXCL10 contributes to p38-mediated apoptosis in primary T lymphocytes in vitro.</title>
        <authorList>
            <person name="Sidahmed A.M."/>
            <person name="Leon A.J."/>
            <person name="Bosinger S.E."/>
            <person name="Banner D."/>
            <person name="Danesh A."/>
            <person name="Cameron M.J."/>
            <person name="Kelvin D.J."/>
        </authorList>
    </citation>
    <scope>FUNCTION</scope>
</reference>
<reference key="15">
    <citation type="journal article" date="2002" name="Biochemistry">
        <title>The CXCR3 binding chemokine IP-10/CXCL10: structure and receptor interactions.</title>
        <authorList>
            <person name="Booth V."/>
            <person name="Keizer D.W."/>
            <person name="Kamphuis M.B."/>
            <person name="Clark-Lewis I."/>
            <person name="Sykes B.D."/>
        </authorList>
    </citation>
    <scope>STRUCTURE BY NMR OF 22-98</scope>
    <scope>DISULFIDE BOND</scope>
</reference>
<reference key="16">
    <citation type="journal article" date="2003" name="Structure">
        <title>Crystal structures of oligomeric forms of the IP-10/CXCL10 chemokine.</title>
        <authorList>
            <person name="Swaminathan G.J."/>
            <person name="Holloway D.E."/>
            <person name="Colvin R.A."/>
            <person name="Campanella G.K."/>
            <person name="Papageorgiou A.C."/>
            <person name="Luster A.D."/>
            <person name="Acharya K.R."/>
        </authorList>
    </citation>
    <scope>X-RAY CRYSTALLOGRAPHY (1.92 ANGSTROMS)</scope>
    <scope>DISULFIDE BONDS</scope>
    <scope>SUBUNIT</scope>
</reference>
<keyword id="KW-0002">3D-structure</keyword>
<keyword id="KW-0145">Chemotaxis</keyword>
<keyword id="KW-0164">Citrullination</keyword>
<keyword id="KW-0202">Cytokine</keyword>
<keyword id="KW-0903">Direct protein sequencing</keyword>
<keyword id="KW-1015">Disulfide bond</keyword>
<keyword id="KW-0395">Inflammatory response</keyword>
<keyword id="KW-1267">Proteomics identification</keyword>
<keyword id="KW-1185">Reference proteome</keyword>
<keyword id="KW-0964">Secreted</keyword>
<keyword id="KW-0732">Signal</keyword>
<name>CXL10_HUMAN</name>